<reference key="1">
    <citation type="journal article" date="1997" name="Science">
        <title>The complete genome sequence of Escherichia coli K-12.</title>
        <authorList>
            <person name="Blattner F.R."/>
            <person name="Plunkett G. III"/>
            <person name="Bloch C.A."/>
            <person name="Perna N.T."/>
            <person name="Burland V."/>
            <person name="Riley M."/>
            <person name="Collado-Vides J."/>
            <person name="Glasner J.D."/>
            <person name="Rode C.K."/>
            <person name="Mayhew G.F."/>
            <person name="Gregor J."/>
            <person name="Davis N.W."/>
            <person name="Kirkpatrick H.A."/>
            <person name="Goeden M.A."/>
            <person name="Rose D.J."/>
            <person name="Mau B."/>
            <person name="Shao Y."/>
        </authorList>
    </citation>
    <scope>NUCLEOTIDE SEQUENCE [LARGE SCALE GENOMIC DNA]</scope>
    <source>
        <strain>K12 / MG1655 / ATCC 47076</strain>
    </source>
</reference>
<reference key="2">
    <citation type="journal article" date="2006" name="Mol. Syst. Biol.">
        <title>Highly accurate genome sequences of Escherichia coli K-12 strains MG1655 and W3110.</title>
        <authorList>
            <person name="Hayashi K."/>
            <person name="Morooka N."/>
            <person name="Yamamoto Y."/>
            <person name="Fujita K."/>
            <person name="Isono K."/>
            <person name="Choi S."/>
            <person name="Ohtsubo E."/>
            <person name="Baba T."/>
            <person name="Wanner B.L."/>
            <person name="Mori H."/>
            <person name="Horiuchi T."/>
        </authorList>
    </citation>
    <scope>NUCLEOTIDE SEQUENCE [LARGE SCALE GENOMIC DNA]</scope>
    <source>
        <strain>K12 / W3110 / ATCC 27325 / DSM 5911</strain>
    </source>
</reference>
<reference key="3">
    <citation type="journal article" date="2008" name="Mol. Microbiol.">
        <title>Small membrane proteins found by comparative genomics and ribosome binding site models.</title>
        <authorList>
            <person name="Hemm M.R."/>
            <person name="Paul B.J."/>
            <person name="Schneider T.D."/>
            <person name="Storz G."/>
            <person name="Rudd K.E."/>
        </authorList>
    </citation>
    <scope>INDUCTION</scope>
    <source>
        <strain>K12 / MG1655 / ATCC 47076</strain>
    </source>
</reference>
<reference key="4">
    <citation type="journal article" date="2010" name="J. Bacteriol.">
        <title>Small stress response proteins in Escherichia coli: proteins missed by classical proteomic studies.</title>
        <authorList>
            <person name="Hemm M.R."/>
            <person name="Paul B.J."/>
            <person name="Miranda-Rios J."/>
            <person name="Zhang A."/>
            <person name="Soltanzad N."/>
            <person name="Storz G."/>
        </authorList>
    </citation>
    <scope>INDUCTION</scope>
    <source>
        <strain>K12 / MG1655 / ATCC 47076</strain>
    </source>
</reference>
<sequence length="35" mass="4115">MPTKRFDKKHWKMVVVLLAICGAMLLLRWAAMIWG</sequence>
<dbReference type="EMBL" id="U00096">
    <property type="protein sequence ID" value="ABD18671.2"/>
    <property type="molecule type" value="Genomic_DNA"/>
</dbReference>
<dbReference type="EMBL" id="AP009048">
    <property type="protein sequence ID" value="BAE76507.1"/>
    <property type="status" value="ALT_INIT"/>
    <property type="molecule type" value="Genomic_DNA"/>
</dbReference>
<dbReference type="RefSeq" id="WP_001142445.1">
    <property type="nucleotide sequence ID" value="NZ_STEB01000009.1"/>
</dbReference>
<dbReference type="RefSeq" id="YP_588455.2">
    <property type="nucleotide sequence ID" value="NC_000913.3"/>
</dbReference>
<dbReference type="SMR" id="Q2EES1"/>
<dbReference type="BioGRID" id="4262191">
    <property type="interactions" value="26"/>
</dbReference>
<dbReference type="STRING" id="511145.b4535"/>
<dbReference type="PaxDb" id="511145-b4535"/>
<dbReference type="EnsemblBacteria" id="ABD18671">
    <property type="protein sequence ID" value="ABD18671"/>
    <property type="gene ID" value="b4535"/>
</dbReference>
<dbReference type="GeneID" id="1450269"/>
<dbReference type="GeneID" id="93775934"/>
<dbReference type="KEGG" id="ecj:JW5911"/>
<dbReference type="KEGG" id="eco:b4535"/>
<dbReference type="KEGG" id="ecoc:C3026_09845"/>
<dbReference type="PATRIC" id="fig|511145.12.peg.1792"/>
<dbReference type="eggNOG" id="ENOG5033FD2">
    <property type="taxonomic scope" value="Bacteria"/>
</dbReference>
<dbReference type="HOGENOM" id="CLU_218065_0_0_6"/>
<dbReference type="InParanoid" id="Q2EES1"/>
<dbReference type="OrthoDB" id="6570236at2"/>
<dbReference type="BioCyc" id="EcoCyc:MONOMER0-2675"/>
<dbReference type="PRO" id="PR:Q2EES1"/>
<dbReference type="Proteomes" id="UP000000625">
    <property type="component" value="Chromosome"/>
</dbReference>
<dbReference type="GO" id="GO:0016020">
    <property type="term" value="C:membrane"/>
    <property type="evidence" value="ECO:0007669"/>
    <property type="project" value="UniProtKB-SubCell"/>
</dbReference>
<dbReference type="InterPro" id="IPR048084">
    <property type="entry name" value="YniD-like"/>
</dbReference>
<dbReference type="NCBIfam" id="NF041491">
    <property type="entry name" value="membrane_YniD"/>
    <property type="match status" value="1"/>
</dbReference>
<evidence type="ECO:0000255" key="1"/>
<evidence type="ECO:0000269" key="2">
    <source>
    </source>
</evidence>
<evidence type="ECO:0000269" key="3">
    <source>
    </source>
</evidence>
<evidence type="ECO:0000305" key="4"/>
<comment type="subcellular location">
    <subcellularLocation>
        <location evidence="4">Membrane</location>
        <topology evidence="4">Single-pass membrane protein</topology>
    </subcellularLocation>
</comment>
<comment type="induction">
    <text evidence="2 3">Constitutively expressed (at protein level).</text>
</comment>
<comment type="sequence caution" evidence="4">
    <conflict type="erroneous initiation">
        <sequence resource="EMBL-CDS" id="BAE76507"/>
    </conflict>
    <text>Extended N-terminus.</text>
</comment>
<gene>
    <name type="primary">yniD</name>
    <name type="ordered locus">b4535</name>
    <name type="ordered locus">JW5911</name>
</gene>
<feature type="chain" id="PRO_0000246681" description="Uncharacterized protein YniD">
    <location>
        <begin position="1"/>
        <end position="35"/>
    </location>
</feature>
<feature type="transmembrane region" description="Helical" evidence="1">
    <location>
        <begin position="14"/>
        <end position="34"/>
    </location>
</feature>
<protein>
    <recommendedName>
        <fullName>Uncharacterized protein YniD</fullName>
    </recommendedName>
</protein>
<keyword id="KW-0472">Membrane</keyword>
<keyword id="KW-1185">Reference proteome</keyword>
<keyword id="KW-0346">Stress response</keyword>
<keyword id="KW-0812">Transmembrane</keyword>
<keyword id="KW-1133">Transmembrane helix</keyword>
<organism>
    <name type="scientific">Escherichia coli (strain K12)</name>
    <dbReference type="NCBI Taxonomy" id="83333"/>
    <lineage>
        <taxon>Bacteria</taxon>
        <taxon>Pseudomonadati</taxon>
        <taxon>Pseudomonadota</taxon>
        <taxon>Gammaproteobacteria</taxon>
        <taxon>Enterobacterales</taxon>
        <taxon>Enterobacteriaceae</taxon>
        <taxon>Escherichia</taxon>
    </lineage>
</organism>
<accession>Q2EES1</accession>
<accession>Q2MB49</accession>
<proteinExistence type="evidence at protein level"/>
<name>YNID_ECOLI</name>